<keyword id="KW-0131">Cell cycle</keyword>
<keyword id="KW-0175">Coiled coil</keyword>
<keyword id="KW-0963">Cytoplasm</keyword>
<keyword id="KW-0206">Cytoskeleton</keyword>
<keyword id="KW-1185">Reference proteome</keyword>
<keyword id="KW-0677">Repeat</keyword>
<accession>Q6DFB7</accession>
<name>POC5_XENLA</name>
<sequence>MSSDEEYRESPILPKDSDHGSSVSSDLQDEYDELLRYAVVTPRFGPHFPEQNQLFTEQIKSDRFSSPKDPVQEQSLARNYSEENIPECSATSTSQRRSPPTANEEERAMSEKKSFLSGLEAFSPLHSEDLSLGGSTSSGSQVQQVRVKELPVPAENMDKVEDVLDLWSGTLKTNVMAELSKWRLTVIEQHKLEIKNQNEKHAEQISQLSSQIDKLQDHLQTYETSIQRKDEVISNLTHALEKHKEKMELMRTFTHWRLQLTEAREEDYARSLADRHYRNTLMKNAWKAWHSVIQSNWKDKIEQACRARAEEVCIELSNDYESKLTQLNSALGEARAEVQRLLAERGQFEGSMKKAFMRGVCALNMEAMSMFQGRESRMEYDPPPRREERDPSPSVTFQNPPVTSTHTSSTQHELQSALHSPVTCEPNYIHAFGPSTVSQSKEEAGAPAVISAATSASSVLSTQKLPMPRVVTSCQQKAGKIITARISARPDVSQRSSKIGSNITSMAVSPPISSIVVEKHHPVTQQTISQAAAAKYPRSALQSANSVGGRSTGQSGRVSQSHAGIHSIKVVD</sequence>
<organism>
    <name type="scientific">Xenopus laevis</name>
    <name type="common">African clawed frog</name>
    <dbReference type="NCBI Taxonomy" id="8355"/>
    <lineage>
        <taxon>Eukaryota</taxon>
        <taxon>Metazoa</taxon>
        <taxon>Chordata</taxon>
        <taxon>Craniata</taxon>
        <taxon>Vertebrata</taxon>
        <taxon>Euteleostomi</taxon>
        <taxon>Amphibia</taxon>
        <taxon>Batrachia</taxon>
        <taxon>Anura</taxon>
        <taxon>Pipoidea</taxon>
        <taxon>Pipidae</taxon>
        <taxon>Xenopodinae</taxon>
        <taxon>Xenopus</taxon>
        <taxon>Xenopus</taxon>
    </lineage>
</organism>
<comment type="function">
    <text evidence="1">Essential for the assembly of the distal half of centrioles, required for centriole elongation. Acts as a negative regulator of centriole elongation.</text>
</comment>
<comment type="subcellular location">
    <subcellularLocation>
        <location evidence="1">Cytoplasm</location>
        <location evidence="1">Cytoskeleton</location>
        <location evidence="1">Microtubule organizing center</location>
        <location evidence="1">Centrosome</location>
    </subcellularLocation>
    <subcellularLocation>
        <location evidence="1">Cytoplasm</location>
        <location evidence="1">Cytoskeleton</location>
        <location evidence="1">Microtubule organizing center</location>
        <location evidence="1">Centrosome</location>
        <location evidence="1">Centriole</location>
    </subcellularLocation>
    <text evidence="1">Localized to the distal portion of centrioles. Localizes to the inner scaffold in the central region of centrioles.</text>
</comment>
<comment type="similarity">
    <text evidence="4">Belongs to the POC5 family.</text>
</comment>
<protein>
    <recommendedName>
        <fullName>Centrosomal protein POC5</fullName>
    </recommendedName>
    <alternativeName>
        <fullName>Protein of centriole 5</fullName>
    </alternativeName>
</protein>
<proteinExistence type="evidence at transcript level"/>
<dbReference type="EMBL" id="BC076822">
    <property type="protein sequence ID" value="AAH76822.1"/>
    <property type="molecule type" value="mRNA"/>
</dbReference>
<dbReference type="RefSeq" id="NP_001086572.1">
    <property type="nucleotide sequence ID" value="NM_001093103.1"/>
</dbReference>
<dbReference type="SMR" id="Q6DFB7"/>
<dbReference type="DNASU" id="446407"/>
<dbReference type="GeneID" id="446407"/>
<dbReference type="KEGG" id="xla:446407"/>
<dbReference type="AGR" id="Xenbase:XB-GENE-5850643"/>
<dbReference type="CTD" id="446407"/>
<dbReference type="Xenbase" id="XB-GENE-5850643">
    <property type="gene designation" value="poc5.L"/>
</dbReference>
<dbReference type="OrthoDB" id="10064898at2759"/>
<dbReference type="Proteomes" id="UP000186698">
    <property type="component" value="Chromosome 1L"/>
</dbReference>
<dbReference type="Bgee" id="446407">
    <property type="expression patterns" value="Expressed in egg cell and 19 other cell types or tissues"/>
</dbReference>
<dbReference type="GO" id="GO:0005814">
    <property type="term" value="C:centriole"/>
    <property type="evidence" value="ECO:0000250"/>
    <property type="project" value="UniProtKB"/>
</dbReference>
<dbReference type="GO" id="GO:0005813">
    <property type="term" value="C:centrosome"/>
    <property type="evidence" value="ECO:0000250"/>
    <property type="project" value="UniProtKB"/>
</dbReference>
<dbReference type="GO" id="GO:0005737">
    <property type="term" value="C:cytoplasm"/>
    <property type="evidence" value="ECO:0007669"/>
    <property type="project" value="UniProtKB-KW"/>
</dbReference>
<dbReference type="GO" id="GO:0032391">
    <property type="term" value="C:photoreceptor connecting cilium"/>
    <property type="evidence" value="ECO:0000318"/>
    <property type="project" value="GO_Central"/>
</dbReference>
<dbReference type="GO" id="GO:0061511">
    <property type="term" value="P:centriole elongation"/>
    <property type="evidence" value="ECO:0000250"/>
    <property type="project" value="UniProtKB"/>
</dbReference>
<dbReference type="GO" id="GO:0042462">
    <property type="term" value="P:eye photoreceptor cell development"/>
    <property type="evidence" value="ECO:0000318"/>
    <property type="project" value="GO_Central"/>
</dbReference>
<dbReference type="GO" id="GO:1903723">
    <property type="term" value="P:negative regulation of centriole elongation"/>
    <property type="evidence" value="ECO:0000250"/>
    <property type="project" value="UniProtKB"/>
</dbReference>
<dbReference type="InterPro" id="IPR033351">
    <property type="entry name" value="POC5"/>
</dbReference>
<dbReference type="PANTHER" id="PTHR28618">
    <property type="entry name" value="CENTROSOMAL PROTEIN POC5"/>
    <property type="match status" value="1"/>
</dbReference>
<dbReference type="PANTHER" id="PTHR28618:SF1">
    <property type="entry name" value="CENTROSOMAL PROTEIN POC5"/>
    <property type="match status" value="1"/>
</dbReference>
<reference key="1">
    <citation type="submission" date="2004-07" db="EMBL/GenBank/DDBJ databases">
        <authorList>
            <consortium name="NIH - Xenopus Gene Collection (XGC) project"/>
        </authorList>
    </citation>
    <scope>NUCLEOTIDE SEQUENCE [LARGE SCALE MRNA]</scope>
    <source>
        <tissue>Oocyte</tissue>
    </source>
</reference>
<feature type="chain" id="PRO_0000281912" description="Centrosomal protein POC5">
    <location>
        <begin position="1"/>
        <end position="572"/>
    </location>
</feature>
<feature type="repeat" description="Centrin-binding (CBR) 1">
    <location>
        <begin position="143"/>
        <end position="174"/>
    </location>
</feature>
<feature type="repeat" description="Centrin-binding (CBR) 2">
    <location>
        <begin position="232"/>
        <end position="263"/>
    </location>
</feature>
<feature type="repeat" description="Centrin-binding (CBR) 3">
    <location>
        <begin position="264"/>
        <end position="296"/>
    </location>
</feature>
<feature type="region of interest" description="Disordered" evidence="3">
    <location>
        <begin position="1"/>
        <end position="27"/>
    </location>
</feature>
<feature type="region of interest" description="Disordered" evidence="3">
    <location>
        <begin position="44"/>
        <end position="111"/>
    </location>
</feature>
<feature type="region of interest" description="Disordered" evidence="3">
    <location>
        <begin position="375"/>
        <end position="419"/>
    </location>
</feature>
<feature type="region of interest" description="Disordered" evidence="3">
    <location>
        <begin position="542"/>
        <end position="572"/>
    </location>
</feature>
<feature type="coiled-coil region" evidence="2">
    <location>
        <begin position="187"/>
        <end position="251"/>
    </location>
</feature>
<feature type="coiled-coil region" evidence="2">
    <location>
        <begin position="317"/>
        <end position="353"/>
    </location>
</feature>
<feature type="compositionally biased region" description="Polar residues" evidence="3">
    <location>
        <begin position="89"/>
        <end position="101"/>
    </location>
</feature>
<feature type="compositionally biased region" description="Basic and acidic residues" evidence="3">
    <location>
        <begin position="375"/>
        <end position="391"/>
    </location>
</feature>
<feature type="compositionally biased region" description="Polar residues" evidence="3">
    <location>
        <begin position="395"/>
        <end position="418"/>
    </location>
</feature>
<feature type="compositionally biased region" description="Polar residues" evidence="3">
    <location>
        <begin position="542"/>
        <end position="562"/>
    </location>
</feature>
<evidence type="ECO:0000250" key="1">
    <source>
        <dbReference type="UniProtKB" id="Q8NA72"/>
    </source>
</evidence>
<evidence type="ECO:0000255" key="2"/>
<evidence type="ECO:0000256" key="3">
    <source>
        <dbReference type="SAM" id="MobiDB-lite"/>
    </source>
</evidence>
<evidence type="ECO:0000305" key="4"/>
<gene>
    <name type="primary">poc5</name>
</gene>